<feature type="chain" id="PRO_0000128873" description="4-hydroxy-3-methylbut-2-enyl diphosphate reductase">
    <location>
        <begin position="1"/>
        <end position="316"/>
    </location>
</feature>
<feature type="active site" description="Proton donor" evidence="1">
    <location>
        <position position="131"/>
    </location>
</feature>
<feature type="binding site" evidence="1">
    <location>
        <position position="17"/>
    </location>
    <ligand>
        <name>[4Fe-4S] cluster</name>
        <dbReference type="ChEBI" id="CHEBI:49883"/>
    </ligand>
</feature>
<feature type="binding site" evidence="1">
    <location>
        <position position="46"/>
    </location>
    <ligand>
        <name>(2E)-4-hydroxy-3-methylbut-2-enyl diphosphate</name>
        <dbReference type="ChEBI" id="CHEBI:128753"/>
    </ligand>
</feature>
<feature type="binding site" evidence="1">
    <location>
        <position position="46"/>
    </location>
    <ligand>
        <name>dimethylallyl diphosphate</name>
        <dbReference type="ChEBI" id="CHEBI:57623"/>
    </ligand>
</feature>
<feature type="binding site" evidence="1">
    <location>
        <position position="46"/>
    </location>
    <ligand>
        <name>isopentenyl diphosphate</name>
        <dbReference type="ChEBI" id="CHEBI:128769"/>
    </ligand>
</feature>
<feature type="binding site" evidence="1">
    <location>
        <position position="79"/>
    </location>
    <ligand>
        <name>(2E)-4-hydroxy-3-methylbut-2-enyl diphosphate</name>
        <dbReference type="ChEBI" id="CHEBI:128753"/>
    </ligand>
</feature>
<feature type="binding site" evidence="1">
    <location>
        <position position="79"/>
    </location>
    <ligand>
        <name>dimethylallyl diphosphate</name>
        <dbReference type="ChEBI" id="CHEBI:57623"/>
    </ligand>
</feature>
<feature type="binding site" evidence="1">
    <location>
        <position position="79"/>
    </location>
    <ligand>
        <name>isopentenyl diphosphate</name>
        <dbReference type="ChEBI" id="CHEBI:128769"/>
    </ligand>
</feature>
<feature type="binding site" evidence="1">
    <location>
        <position position="101"/>
    </location>
    <ligand>
        <name>[4Fe-4S] cluster</name>
        <dbReference type="ChEBI" id="CHEBI:49883"/>
    </ligand>
</feature>
<feature type="binding site" evidence="1">
    <location>
        <position position="129"/>
    </location>
    <ligand>
        <name>(2E)-4-hydroxy-3-methylbut-2-enyl diphosphate</name>
        <dbReference type="ChEBI" id="CHEBI:128753"/>
    </ligand>
</feature>
<feature type="binding site" evidence="1">
    <location>
        <position position="129"/>
    </location>
    <ligand>
        <name>dimethylallyl diphosphate</name>
        <dbReference type="ChEBI" id="CHEBI:57623"/>
    </ligand>
</feature>
<feature type="binding site" evidence="1">
    <location>
        <position position="129"/>
    </location>
    <ligand>
        <name>isopentenyl diphosphate</name>
        <dbReference type="ChEBI" id="CHEBI:128769"/>
    </ligand>
</feature>
<feature type="binding site" evidence="1">
    <location>
        <position position="170"/>
    </location>
    <ligand>
        <name>(2E)-4-hydroxy-3-methylbut-2-enyl diphosphate</name>
        <dbReference type="ChEBI" id="CHEBI:128753"/>
    </ligand>
</feature>
<feature type="binding site" evidence="1">
    <location>
        <position position="200"/>
    </location>
    <ligand>
        <name>[4Fe-4S] cluster</name>
        <dbReference type="ChEBI" id="CHEBI:49883"/>
    </ligand>
</feature>
<feature type="binding site" evidence="1">
    <location>
        <position position="228"/>
    </location>
    <ligand>
        <name>(2E)-4-hydroxy-3-methylbut-2-enyl diphosphate</name>
        <dbReference type="ChEBI" id="CHEBI:128753"/>
    </ligand>
</feature>
<feature type="binding site" evidence="1">
    <location>
        <position position="228"/>
    </location>
    <ligand>
        <name>dimethylallyl diphosphate</name>
        <dbReference type="ChEBI" id="CHEBI:57623"/>
    </ligand>
</feature>
<feature type="binding site" evidence="1">
    <location>
        <position position="228"/>
    </location>
    <ligand>
        <name>isopentenyl diphosphate</name>
        <dbReference type="ChEBI" id="CHEBI:128769"/>
    </ligand>
</feature>
<feature type="binding site" evidence="1">
    <location>
        <position position="229"/>
    </location>
    <ligand>
        <name>(2E)-4-hydroxy-3-methylbut-2-enyl diphosphate</name>
        <dbReference type="ChEBI" id="CHEBI:128753"/>
    </ligand>
</feature>
<feature type="binding site" evidence="1">
    <location>
        <position position="229"/>
    </location>
    <ligand>
        <name>dimethylallyl diphosphate</name>
        <dbReference type="ChEBI" id="CHEBI:57623"/>
    </ligand>
</feature>
<feature type="binding site" evidence="1">
    <location>
        <position position="229"/>
    </location>
    <ligand>
        <name>isopentenyl diphosphate</name>
        <dbReference type="ChEBI" id="CHEBI:128769"/>
    </ligand>
</feature>
<feature type="binding site" evidence="1">
    <location>
        <position position="230"/>
    </location>
    <ligand>
        <name>(2E)-4-hydroxy-3-methylbut-2-enyl diphosphate</name>
        <dbReference type="ChEBI" id="CHEBI:128753"/>
    </ligand>
</feature>
<feature type="binding site" evidence="1">
    <location>
        <position position="230"/>
    </location>
    <ligand>
        <name>dimethylallyl diphosphate</name>
        <dbReference type="ChEBI" id="CHEBI:57623"/>
    </ligand>
</feature>
<feature type="binding site" evidence="1">
    <location>
        <position position="230"/>
    </location>
    <ligand>
        <name>isopentenyl diphosphate</name>
        <dbReference type="ChEBI" id="CHEBI:128769"/>
    </ligand>
</feature>
<feature type="binding site" evidence="1">
    <location>
        <position position="273"/>
    </location>
    <ligand>
        <name>(2E)-4-hydroxy-3-methylbut-2-enyl diphosphate</name>
        <dbReference type="ChEBI" id="CHEBI:128753"/>
    </ligand>
</feature>
<feature type="binding site" evidence="1">
    <location>
        <position position="273"/>
    </location>
    <ligand>
        <name>dimethylallyl diphosphate</name>
        <dbReference type="ChEBI" id="CHEBI:57623"/>
    </ligand>
</feature>
<feature type="binding site" evidence="1">
    <location>
        <position position="273"/>
    </location>
    <ligand>
        <name>isopentenyl diphosphate</name>
        <dbReference type="ChEBI" id="CHEBI:128769"/>
    </ligand>
</feature>
<name>ISPH_RUEPO</name>
<accession>Q5LNJ7</accession>
<sequence>MTKSPLTLYLAAPRGFCAGVDRAIKIVEMAIEKWGAPVYVRHEIVHNKFVVDGLRAKGAVFVEELDECPDDRPVIFSAHGVPKAIPAEAERRQMVYVDATCPLVSKVHIEAERHAEHGLQIIMIGHRGHPETIGTMGQLPEGEVLLVETVADVARIAVRDPARLAFVTQTTLSVDDTRDIVAALQARFPQIVGPHKEDICYATTNRQEAVKAVAPKSDALLVVGAPNSSNSRRLVEVAAKAGCSYAQLVQRADDIDWRALDGIATIAVSAGASAPELLVNEVIDAFRARFDVTVEVVETAVEHVEFKVPRVLRQPA</sequence>
<protein>
    <recommendedName>
        <fullName evidence="1">4-hydroxy-3-methylbut-2-enyl diphosphate reductase</fullName>
        <shortName evidence="1">HMBPP reductase</shortName>
        <ecNumber evidence="1">1.17.7.4</ecNumber>
    </recommendedName>
</protein>
<reference key="1">
    <citation type="journal article" date="2004" name="Nature">
        <title>Genome sequence of Silicibacter pomeroyi reveals adaptations to the marine environment.</title>
        <authorList>
            <person name="Moran M.A."/>
            <person name="Buchan A."/>
            <person name="Gonzalez J.M."/>
            <person name="Heidelberg J.F."/>
            <person name="Whitman W.B."/>
            <person name="Kiene R.P."/>
            <person name="Henriksen J.R."/>
            <person name="King G.M."/>
            <person name="Belas R."/>
            <person name="Fuqua C."/>
            <person name="Brinkac L.M."/>
            <person name="Lewis M."/>
            <person name="Johri S."/>
            <person name="Weaver B."/>
            <person name="Pai G."/>
            <person name="Eisen J.A."/>
            <person name="Rahe E."/>
            <person name="Sheldon W.M."/>
            <person name="Ye W."/>
            <person name="Miller T.R."/>
            <person name="Carlton J."/>
            <person name="Rasko D.A."/>
            <person name="Paulsen I.T."/>
            <person name="Ren Q."/>
            <person name="Daugherty S.C."/>
            <person name="DeBoy R.T."/>
            <person name="Dodson R.J."/>
            <person name="Durkin A.S."/>
            <person name="Madupu R."/>
            <person name="Nelson W.C."/>
            <person name="Sullivan S.A."/>
            <person name="Rosovitz M.J."/>
            <person name="Haft D.H."/>
            <person name="Selengut J."/>
            <person name="Ward N."/>
        </authorList>
    </citation>
    <scope>NUCLEOTIDE SEQUENCE [LARGE SCALE GENOMIC DNA]</scope>
    <source>
        <strain>ATCC 700808 / DSM 15171 / DSS-3</strain>
    </source>
</reference>
<reference key="2">
    <citation type="journal article" date="2014" name="Stand. Genomic Sci.">
        <title>An updated genome annotation for the model marine bacterium Ruegeria pomeroyi DSS-3.</title>
        <authorList>
            <person name="Rivers A.R."/>
            <person name="Smith C.B."/>
            <person name="Moran M.A."/>
        </authorList>
    </citation>
    <scope>GENOME REANNOTATION</scope>
    <source>
        <strain>ATCC 700808 / DSM 15171 / DSS-3</strain>
    </source>
</reference>
<dbReference type="EC" id="1.17.7.4" evidence="1"/>
<dbReference type="EMBL" id="CP000031">
    <property type="protein sequence ID" value="AAV96442.1"/>
    <property type="molecule type" value="Genomic_DNA"/>
</dbReference>
<dbReference type="RefSeq" id="WP_011048897.1">
    <property type="nucleotide sequence ID" value="NC_003911.12"/>
</dbReference>
<dbReference type="SMR" id="Q5LNJ7"/>
<dbReference type="STRING" id="246200.SPO3207"/>
<dbReference type="PaxDb" id="246200-SPO3207"/>
<dbReference type="KEGG" id="sil:SPO3207"/>
<dbReference type="eggNOG" id="COG0761">
    <property type="taxonomic scope" value="Bacteria"/>
</dbReference>
<dbReference type="HOGENOM" id="CLU_027486_1_0_5"/>
<dbReference type="OrthoDB" id="9804068at2"/>
<dbReference type="UniPathway" id="UPA00056">
    <property type="reaction ID" value="UER00097"/>
</dbReference>
<dbReference type="UniPathway" id="UPA00059">
    <property type="reaction ID" value="UER00105"/>
</dbReference>
<dbReference type="Proteomes" id="UP000001023">
    <property type="component" value="Chromosome"/>
</dbReference>
<dbReference type="GO" id="GO:0051539">
    <property type="term" value="F:4 iron, 4 sulfur cluster binding"/>
    <property type="evidence" value="ECO:0007669"/>
    <property type="project" value="UniProtKB-UniRule"/>
</dbReference>
<dbReference type="GO" id="GO:0051745">
    <property type="term" value="F:4-hydroxy-3-methylbut-2-enyl diphosphate reductase activity"/>
    <property type="evidence" value="ECO:0007669"/>
    <property type="project" value="UniProtKB-UniRule"/>
</dbReference>
<dbReference type="GO" id="GO:0046872">
    <property type="term" value="F:metal ion binding"/>
    <property type="evidence" value="ECO:0007669"/>
    <property type="project" value="UniProtKB-KW"/>
</dbReference>
<dbReference type="GO" id="GO:0050992">
    <property type="term" value="P:dimethylallyl diphosphate biosynthetic process"/>
    <property type="evidence" value="ECO:0007669"/>
    <property type="project" value="UniProtKB-UniRule"/>
</dbReference>
<dbReference type="GO" id="GO:0019288">
    <property type="term" value="P:isopentenyl diphosphate biosynthetic process, methylerythritol 4-phosphate pathway"/>
    <property type="evidence" value="ECO:0007669"/>
    <property type="project" value="UniProtKB-UniRule"/>
</dbReference>
<dbReference type="GO" id="GO:0016114">
    <property type="term" value="P:terpenoid biosynthetic process"/>
    <property type="evidence" value="ECO:0007669"/>
    <property type="project" value="UniProtKB-UniRule"/>
</dbReference>
<dbReference type="CDD" id="cd13944">
    <property type="entry name" value="lytB_ispH"/>
    <property type="match status" value="1"/>
</dbReference>
<dbReference type="Gene3D" id="3.40.50.11270">
    <property type="match status" value="1"/>
</dbReference>
<dbReference type="Gene3D" id="3.40.1010.20">
    <property type="entry name" value="4-hydroxy-3-methylbut-2-enyl diphosphate reductase, catalytic domain"/>
    <property type="match status" value="2"/>
</dbReference>
<dbReference type="HAMAP" id="MF_00191">
    <property type="entry name" value="IspH"/>
    <property type="match status" value="1"/>
</dbReference>
<dbReference type="InterPro" id="IPR003451">
    <property type="entry name" value="LytB/IspH"/>
</dbReference>
<dbReference type="NCBIfam" id="TIGR00216">
    <property type="entry name" value="ispH_lytB"/>
    <property type="match status" value="1"/>
</dbReference>
<dbReference type="NCBIfam" id="NF002188">
    <property type="entry name" value="PRK01045.1-2"/>
    <property type="match status" value="1"/>
</dbReference>
<dbReference type="NCBIfam" id="NF002190">
    <property type="entry name" value="PRK01045.1-4"/>
    <property type="match status" value="1"/>
</dbReference>
<dbReference type="PANTHER" id="PTHR30426">
    <property type="entry name" value="4-HYDROXY-3-METHYLBUT-2-ENYL DIPHOSPHATE REDUCTASE"/>
    <property type="match status" value="1"/>
</dbReference>
<dbReference type="PANTHER" id="PTHR30426:SF0">
    <property type="entry name" value="4-HYDROXY-3-METHYLBUT-2-ENYL DIPHOSPHATE REDUCTASE"/>
    <property type="match status" value="1"/>
</dbReference>
<dbReference type="Pfam" id="PF02401">
    <property type="entry name" value="LYTB"/>
    <property type="match status" value="1"/>
</dbReference>
<proteinExistence type="inferred from homology"/>
<gene>
    <name evidence="1" type="primary">ispH</name>
    <name type="ordered locus">SPO3207</name>
</gene>
<keyword id="KW-0004">4Fe-4S</keyword>
<keyword id="KW-0408">Iron</keyword>
<keyword id="KW-0411">Iron-sulfur</keyword>
<keyword id="KW-0414">Isoprene biosynthesis</keyword>
<keyword id="KW-0479">Metal-binding</keyword>
<keyword id="KW-0560">Oxidoreductase</keyword>
<keyword id="KW-1185">Reference proteome</keyword>
<organism>
    <name type="scientific">Ruegeria pomeroyi (strain ATCC 700808 / DSM 15171 / DSS-3)</name>
    <name type="common">Silicibacter pomeroyi</name>
    <dbReference type="NCBI Taxonomy" id="246200"/>
    <lineage>
        <taxon>Bacteria</taxon>
        <taxon>Pseudomonadati</taxon>
        <taxon>Pseudomonadota</taxon>
        <taxon>Alphaproteobacteria</taxon>
        <taxon>Rhodobacterales</taxon>
        <taxon>Roseobacteraceae</taxon>
        <taxon>Ruegeria</taxon>
    </lineage>
</organism>
<comment type="function">
    <text evidence="1">Catalyzes the conversion of 1-hydroxy-2-methyl-2-(E)-butenyl 4-diphosphate (HMBPP) into a mixture of isopentenyl diphosphate (IPP) and dimethylallyl diphosphate (DMAPP). Acts in the terminal step of the DOXP/MEP pathway for isoprenoid precursor biosynthesis.</text>
</comment>
<comment type="catalytic activity">
    <reaction evidence="1">
        <text>isopentenyl diphosphate + 2 oxidized [2Fe-2S]-[ferredoxin] + H2O = (2E)-4-hydroxy-3-methylbut-2-enyl diphosphate + 2 reduced [2Fe-2S]-[ferredoxin] + 2 H(+)</text>
        <dbReference type="Rhea" id="RHEA:24488"/>
        <dbReference type="Rhea" id="RHEA-COMP:10000"/>
        <dbReference type="Rhea" id="RHEA-COMP:10001"/>
        <dbReference type="ChEBI" id="CHEBI:15377"/>
        <dbReference type="ChEBI" id="CHEBI:15378"/>
        <dbReference type="ChEBI" id="CHEBI:33737"/>
        <dbReference type="ChEBI" id="CHEBI:33738"/>
        <dbReference type="ChEBI" id="CHEBI:128753"/>
        <dbReference type="ChEBI" id="CHEBI:128769"/>
        <dbReference type="EC" id="1.17.7.4"/>
    </reaction>
</comment>
<comment type="catalytic activity">
    <reaction evidence="1">
        <text>dimethylallyl diphosphate + 2 oxidized [2Fe-2S]-[ferredoxin] + H2O = (2E)-4-hydroxy-3-methylbut-2-enyl diphosphate + 2 reduced [2Fe-2S]-[ferredoxin] + 2 H(+)</text>
        <dbReference type="Rhea" id="RHEA:24825"/>
        <dbReference type="Rhea" id="RHEA-COMP:10000"/>
        <dbReference type="Rhea" id="RHEA-COMP:10001"/>
        <dbReference type="ChEBI" id="CHEBI:15377"/>
        <dbReference type="ChEBI" id="CHEBI:15378"/>
        <dbReference type="ChEBI" id="CHEBI:33737"/>
        <dbReference type="ChEBI" id="CHEBI:33738"/>
        <dbReference type="ChEBI" id="CHEBI:57623"/>
        <dbReference type="ChEBI" id="CHEBI:128753"/>
        <dbReference type="EC" id="1.17.7.4"/>
    </reaction>
</comment>
<comment type="cofactor">
    <cofactor evidence="1">
        <name>[4Fe-4S] cluster</name>
        <dbReference type="ChEBI" id="CHEBI:49883"/>
    </cofactor>
    <text evidence="1">Binds 1 [4Fe-4S] cluster per subunit.</text>
</comment>
<comment type="pathway">
    <text evidence="1">Isoprenoid biosynthesis; dimethylallyl diphosphate biosynthesis; dimethylallyl diphosphate from (2E)-4-hydroxy-3-methylbutenyl diphosphate: step 1/1.</text>
</comment>
<comment type="pathway">
    <text evidence="1">Isoprenoid biosynthesis; isopentenyl diphosphate biosynthesis via DXP pathway; isopentenyl diphosphate from 1-deoxy-D-xylulose 5-phosphate: step 6/6.</text>
</comment>
<comment type="similarity">
    <text evidence="1">Belongs to the IspH family.</text>
</comment>
<evidence type="ECO:0000255" key="1">
    <source>
        <dbReference type="HAMAP-Rule" id="MF_00191"/>
    </source>
</evidence>